<feature type="chain" id="PRO_0000438034" description="Immune-associated nucleotide-binding protein 12">
    <location>
        <begin position="1"/>
        <end position="394"/>
    </location>
</feature>
<feature type="domain" description="AIG1-type G" evidence="3">
    <location>
        <begin position="45"/>
        <end position="251"/>
    </location>
</feature>
<feature type="region of interest" description="G1" evidence="3">
    <location>
        <begin position="54"/>
        <end position="61"/>
    </location>
</feature>
<feature type="region of interest" description="G2" evidence="3">
    <location>
        <begin position="81"/>
        <end position="85"/>
    </location>
</feature>
<feature type="region of interest" description="G3" evidence="3">
    <location>
        <begin position="103"/>
        <end position="106"/>
    </location>
</feature>
<feature type="region of interest" description="G4" evidence="3">
    <location>
        <begin position="173"/>
        <end position="176"/>
    </location>
</feature>
<feature type="region of interest" description="G5" evidence="3">
    <location>
        <begin position="210"/>
        <end position="212"/>
    </location>
</feature>
<feature type="coiled-coil region" evidence="2">
    <location>
        <begin position="289"/>
        <end position="387"/>
    </location>
</feature>
<feature type="binding site" evidence="1">
    <location>
        <begin position="54"/>
        <end position="62"/>
    </location>
    <ligand>
        <name>GTP</name>
        <dbReference type="ChEBI" id="CHEBI:37565"/>
    </ligand>
</feature>
<feature type="binding site" evidence="1">
    <location>
        <position position="75"/>
    </location>
    <ligand>
        <name>GTP</name>
        <dbReference type="ChEBI" id="CHEBI:37565"/>
    </ligand>
</feature>
<feature type="binding site" evidence="1">
    <location>
        <position position="211"/>
    </location>
    <ligand>
        <name>GTP</name>
        <dbReference type="ChEBI" id="CHEBI:37565"/>
    </ligand>
</feature>
<accession>Q9T0F3</accession>
<protein>
    <recommendedName>
        <fullName evidence="4">Immune-associated nucleotide-binding protein 12</fullName>
        <shortName evidence="4">AtIAN12</shortName>
    </recommendedName>
    <alternativeName>
        <fullName evidence="5">AIG1-like protein</fullName>
    </alternativeName>
</protein>
<evidence type="ECO:0000250" key="1">
    <source>
        <dbReference type="UniProtKB" id="Q8NHV1"/>
    </source>
</evidence>
<evidence type="ECO:0000255" key="2"/>
<evidence type="ECO:0000255" key="3">
    <source>
        <dbReference type="PROSITE-ProRule" id="PRU01057"/>
    </source>
</evidence>
<evidence type="ECO:0000303" key="4">
    <source>
    </source>
</evidence>
<evidence type="ECO:0000305" key="5"/>
<evidence type="ECO:0000305" key="6">
    <source>
    </source>
</evidence>
<evidence type="ECO:0000312" key="7">
    <source>
        <dbReference type="Araport" id="AT4G09940"/>
    </source>
</evidence>
<evidence type="ECO:0000312" key="8">
    <source>
        <dbReference type="EMBL" id="CAB39618.1"/>
    </source>
</evidence>
<keyword id="KW-0175">Coiled coil</keyword>
<keyword id="KW-0342">GTP-binding</keyword>
<keyword id="KW-0547">Nucleotide-binding</keyword>
<keyword id="KW-1185">Reference proteome</keyword>
<proteinExistence type="evidence at transcript level"/>
<comment type="developmental stage">
    <text evidence="6">Highest expression levels in young seedlings and much lower expression abundance in the later developmental stages.</text>
</comment>
<comment type="induction">
    <text evidence="6">Down-regulated by aphid infection, 2-aminoethoxyvinylglycine (AVG), high CO(2), isoxaben, and propiconazole treatments. Up-regulated by brassinolides.</text>
</comment>
<comment type="similarity">
    <text evidence="5">Belongs to the TRAFAC class TrmE-Era-EngA-EngB-Septin-like GTPase superfamily. AIG1/Toc34/Toc159-like paraseptin GTPase family. IAN subfamily.</text>
</comment>
<name>IAN12_ARATH</name>
<dbReference type="EMBL" id="AL049481">
    <property type="protein sequence ID" value="CAB39618.1"/>
    <property type="molecule type" value="Genomic_DNA"/>
</dbReference>
<dbReference type="EMBL" id="AL161516">
    <property type="protein sequence ID" value="CAB78117.1"/>
    <property type="molecule type" value="Genomic_DNA"/>
</dbReference>
<dbReference type="EMBL" id="CP002687">
    <property type="protein sequence ID" value="AEE82814.1"/>
    <property type="molecule type" value="Genomic_DNA"/>
</dbReference>
<dbReference type="EMBL" id="DQ056647">
    <property type="protein sequence ID" value="AAY78794.1"/>
    <property type="molecule type" value="mRNA"/>
</dbReference>
<dbReference type="PIR" id="T03998">
    <property type="entry name" value="T03998"/>
</dbReference>
<dbReference type="RefSeq" id="NP_192732.1">
    <property type="nucleotide sequence ID" value="NM_117062.2"/>
</dbReference>
<dbReference type="SMR" id="Q9T0F3"/>
<dbReference type="FunCoup" id="Q9T0F3">
    <property type="interactions" value="48"/>
</dbReference>
<dbReference type="STRING" id="3702.Q9T0F3"/>
<dbReference type="iPTMnet" id="Q9T0F3"/>
<dbReference type="PaxDb" id="3702-AT4G09940.1"/>
<dbReference type="ProteomicsDB" id="250634"/>
<dbReference type="EnsemblPlants" id="AT4G09940.1">
    <property type="protein sequence ID" value="AT4G09940.1"/>
    <property type="gene ID" value="AT4G09940"/>
</dbReference>
<dbReference type="GeneID" id="826584"/>
<dbReference type="Gramene" id="AT4G09940.1">
    <property type="protein sequence ID" value="AT4G09940.1"/>
    <property type="gene ID" value="AT4G09940"/>
</dbReference>
<dbReference type="KEGG" id="ath:AT4G09940"/>
<dbReference type="Araport" id="AT4G09940"/>
<dbReference type="TAIR" id="AT4G09940">
    <property type="gene designation" value="IAN12"/>
</dbReference>
<dbReference type="eggNOG" id="ENOG502R7PE">
    <property type="taxonomic scope" value="Eukaryota"/>
</dbReference>
<dbReference type="HOGENOM" id="CLU_010468_0_1_1"/>
<dbReference type="InParanoid" id="Q9T0F3"/>
<dbReference type="OMA" id="PSECHDS"/>
<dbReference type="PhylomeDB" id="Q9T0F3"/>
<dbReference type="PRO" id="PR:Q9T0F3"/>
<dbReference type="Proteomes" id="UP000006548">
    <property type="component" value="Chromosome 4"/>
</dbReference>
<dbReference type="ExpressionAtlas" id="Q9T0F3">
    <property type="expression patterns" value="baseline and differential"/>
</dbReference>
<dbReference type="GO" id="GO:0000325">
    <property type="term" value="C:plant-type vacuole"/>
    <property type="evidence" value="ECO:0007005"/>
    <property type="project" value="TAIR"/>
</dbReference>
<dbReference type="GO" id="GO:0005525">
    <property type="term" value="F:GTP binding"/>
    <property type="evidence" value="ECO:0007669"/>
    <property type="project" value="UniProtKB-KW"/>
</dbReference>
<dbReference type="CDD" id="cd01852">
    <property type="entry name" value="AIG1"/>
    <property type="match status" value="1"/>
</dbReference>
<dbReference type="FunFam" id="3.40.50.300:FF:000840">
    <property type="entry name" value="Immune-associated nucleotide-binding protein 9"/>
    <property type="match status" value="1"/>
</dbReference>
<dbReference type="Gene3D" id="3.40.50.300">
    <property type="entry name" value="P-loop containing nucleotide triphosphate hydrolases"/>
    <property type="match status" value="1"/>
</dbReference>
<dbReference type="InterPro" id="IPR006703">
    <property type="entry name" value="G_AIG1"/>
</dbReference>
<dbReference type="InterPro" id="IPR045058">
    <property type="entry name" value="GIMA/IAN/Toc"/>
</dbReference>
<dbReference type="InterPro" id="IPR027417">
    <property type="entry name" value="P-loop_NTPase"/>
</dbReference>
<dbReference type="PANTHER" id="PTHR10903">
    <property type="entry name" value="GTPASE, IMAP FAMILY MEMBER-RELATED"/>
    <property type="match status" value="1"/>
</dbReference>
<dbReference type="PANTHER" id="PTHR10903:SF122">
    <property type="entry name" value="IMMUNE-ASSOCIATED NUCLEOTIDE-BINDING PROTEIN 11-RELATED"/>
    <property type="match status" value="1"/>
</dbReference>
<dbReference type="Pfam" id="PF04548">
    <property type="entry name" value="AIG1"/>
    <property type="match status" value="1"/>
</dbReference>
<dbReference type="SUPFAM" id="SSF52540">
    <property type="entry name" value="P-loop containing nucleoside triphosphate hydrolases"/>
    <property type="match status" value="1"/>
</dbReference>
<dbReference type="PROSITE" id="PS51720">
    <property type="entry name" value="G_AIG1"/>
    <property type="match status" value="1"/>
</dbReference>
<organism>
    <name type="scientific">Arabidopsis thaliana</name>
    <name type="common">Mouse-ear cress</name>
    <dbReference type="NCBI Taxonomy" id="3702"/>
    <lineage>
        <taxon>Eukaryota</taxon>
        <taxon>Viridiplantae</taxon>
        <taxon>Streptophyta</taxon>
        <taxon>Embryophyta</taxon>
        <taxon>Tracheophyta</taxon>
        <taxon>Spermatophyta</taxon>
        <taxon>Magnoliopsida</taxon>
        <taxon>eudicotyledons</taxon>
        <taxon>Gunneridae</taxon>
        <taxon>Pentapetalae</taxon>
        <taxon>rosids</taxon>
        <taxon>malvids</taxon>
        <taxon>Brassicales</taxon>
        <taxon>Brassicaceae</taxon>
        <taxon>Camelineae</taxon>
        <taxon>Arabidopsis</taxon>
    </lineage>
</organism>
<reference key="1">
    <citation type="journal article" date="1999" name="Nature">
        <title>Sequence and analysis of chromosome 4 of the plant Arabidopsis thaliana.</title>
        <authorList>
            <person name="Mayer K.F.X."/>
            <person name="Schueller C."/>
            <person name="Wambutt R."/>
            <person name="Murphy G."/>
            <person name="Volckaert G."/>
            <person name="Pohl T."/>
            <person name="Duesterhoeft A."/>
            <person name="Stiekema W."/>
            <person name="Entian K.-D."/>
            <person name="Terryn N."/>
            <person name="Harris B."/>
            <person name="Ansorge W."/>
            <person name="Brandt P."/>
            <person name="Grivell L.A."/>
            <person name="Rieger M."/>
            <person name="Weichselgartner M."/>
            <person name="de Simone V."/>
            <person name="Obermaier B."/>
            <person name="Mache R."/>
            <person name="Mueller M."/>
            <person name="Kreis M."/>
            <person name="Delseny M."/>
            <person name="Puigdomenech P."/>
            <person name="Watson M."/>
            <person name="Schmidtheini T."/>
            <person name="Reichert B."/>
            <person name="Portetelle D."/>
            <person name="Perez-Alonso M."/>
            <person name="Boutry M."/>
            <person name="Bancroft I."/>
            <person name="Vos P."/>
            <person name="Hoheisel J."/>
            <person name="Zimmermann W."/>
            <person name="Wedler H."/>
            <person name="Ridley P."/>
            <person name="Langham S.-A."/>
            <person name="McCullagh B."/>
            <person name="Bilham L."/>
            <person name="Robben J."/>
            <person name="van der Schueren J."/>
            <person name="Grymonprez B."/>
            <person name="Chuang Y.-J."/>
            <person name="Vandenbussche F."/>
            <person name="Braeken M."/>
            <person name="Weltjens I."/>
            <person name="Voet M."/>
            <person name="Bastiaens I."/>
            <person name="Aert R."/>
            <person name="Defoor E."/>
            <person name="Weitzenegger T."/>
            <person name="Bothe G."/>
            <person name="Ramsperger U."/>
            <person name="Hilbert H."/>
            <person name="Braun M."/>
            <person name="Holzer E."/>
            <person name="Brandt A."/>
            <person name="Peters S."/>
            <person name="van Staveren M."/>
            <person name="Dirkse W."/>
            <person name="Mooijman P."/>
            <person name="Klein Lankhorst R."/>
            <person name="Rose M."/>
            <person name="Hauf J."/>
            <person name="Koetter P."/>
            <person name="Berneiser S."/>
            <person name="Hempel S."/>
            <person name="Feldpausch M."/>
            <person name="Lamberth S."/>
            <person name="Van den Daele H."/>
            <person name="De Keyser A."/>
            <person name="Buysshaert C."/>
            <person name="Gielen J."/>
            <person name="Villarroel R."/>
            <person name="De Clercq R."/>
            <person name="van Montagu M."/>
            <person name="Rogers J."/>
            <person name="Cronin A."/>
            <person name="Quail M.A."/>
            <person name="Bray-Allen S."/>
            <person name="Clark L."/>
            <person name="Doggett J."/>
            <person name="Hall S."/>
            <person name="Kay M."/>
            <person name="Lennard N."/>
            <person name="McLay K."/>
            <person name="Mayes R."/>
            <person name="Pettett A."/>
            <person name="Rajandream M.A."/>
            <person name="Lyne M."/>
            <person name="Benes V."/>
            <person name="Rechmann S."/>
            <person name="Borkova D."/>
            <person name="Bloecker H."/>
            <person name="Scharfe M."/>
            <person name="Grimm M."/>
            <person name="Loehnert T.-H."/>
            <person name="Dose S."/>
            <person name="de Haan M."/>
            <person name="Maarse A.C."/>
            <person name="Schaefer M."/>
            <person name="Mueller-Auer S."/>
            <person name="Gabel C."/>
            <person name="Fuchs M."/>
            <person name="Fartmann B."/>
            <person name="Granderath K."/>
            <person name="Dauner D."/>
            <person name="Herzl A."/>
            <person name="Neumann S."/>
            <person name="Argiriou A."/>
            <person name="Vitale D."/>
            <person name="Liguori R."/>
            <person name="Piravandi E."/>
            <person name="Massenet O."/>
            <person name="Quigley F."/>
            <person name="Clabauld G."/>
            <person name="Muendlein A."/>
            <person name="Felber R."/>
            <person name="Schnabl S."/>
            <person name="Hiller R."/>
            <person name="Schmidt W."/>
            <person name="Lecharny A."/>
            <person name="Aubourg S."/>
            <person name="Chefdor F."/>
            <person name="Cooke R."/>
            <person name="Berger C."/>
            <person name="Monfort A."/>
            <person name="Casacuberta E."/>
            <person name="Gibbons T."/>
            <person name="Weber N."/>
            <person name="Vandenbol M."/>
            <person name="Bargues M."/>
            <person name="Terol J."/>
            <person name="Torres A."/>
            <person name="Perez-Perez A."/>
            <person name="Purnelle B."/>
            <person name="Bent E."/>
            <person name="Johnson S."/>
            <person name="Tacon D."/>
            <person name="Jesse T."/>
            <person name="Heijnen L."/>
            <person name="Schwarz S."/>
            <person name="Scholler P."/>
            <person name="Heber S."/>
            <person name="Francs P."/>
            <person name="Bielke C."/>
            <person name="Frishman D."/>
            <person name="Haase D."/>
            <person name="Lemcke K."/>
            <person name="Mewes H.-W."/>
            <person name="Stocker S."/>
            <person name="Zaccaria P."/>
            <person name="Bevan M."/>
            <person name="Wilson R.K."/>
            <person name="de la Bastide M."/>
            <person name="Habermann K."/>
            <person name="Parnell L."/>
            <person name="Dedhia N."/>
            <person name="Gnoj L."/>
            <person name="Schutz K."/>
            <person name="Huang E."/>
            <person name="Spiegel L."/>
            <person name="Sekhon M."/>
            <person name="Murray J."/>
            <person name="Sheet P."/>
            <person name="Cordes M."/>
            <person name="Abu-Threideh J."/>
            <person name="Stoneking T."/>
            <person name="Kalicki J."/>
            <person name="Graves T."/>
            <person name="Harmon G."/>
            <person name="Edwards J."/>
            <person name="Latreille P."/>
            <person name="Courtney L."/>
            <person name="Cloud J."/>
            <person name="Abbott A."/>
            <person name="Scott K."/>
            <person name="Johnson D."/>
            <person name="Minx P."/>
            <person name="Bentley D."/>
            <person name="Fulton B."/>
            <person name="Miller N."/>
            <person name="Greco T."/>
            <person name="Kemp K."/>
            <person name="Kramer J."/>
            <person name="Fulton L."/>
            <person name="Mardis E."/>
            <person name="Dante M."/>
            <person name="Pepin K."/>
            <person name="Hillier L.W."/>
            <person name="Nelson J."/>
            <person name="Spieth J."/>
            <person name="Ryan E."/>
            <person name="Andrews S."/>
            <person name="Geisel C."/>
            <person name="Layman D."/>
            <person name="Du H."/>
            <person name="Ali J."/>
            <person name="Berghoff A."/>
            <person name="Jones K."/>
            <person name="Drone K."/>
            <person name="Cotton M."/>
            <person name="Joshu C."/>
            <person name="Antonoiu B."/>
            <person name="Zidanic M."/>
            <person name="Strong C."/>
            <person name="Sun H."/>
            <person name="Lamar B."/>
            <person name="Yordan C."/>
            <person name="Ma P."/>
            <person name="Zhong J."/>
            <person name="Preston R."/>
            <person name="Vil D."/>
            <person name="Shekher M."/>
            <person name="Matero A."/>
            <person name="Shah R."/>
            <person name="Swaby I.K."/>
            <person name="O'Shaughnessy A."/>
            <person name="Rodriguez M."/>
            <person name="Hoffman J."/>
            <person name="Till S."/>
            <person name="Granat S."/>
            <person name="Shohdy N."/>
            <person name="Hasegawa A."/>
            <person name="Hameed A."/>
            <person name="Lodhi M."/>
            <person name="Johnson A."/>
            <person name="Chen E."/>
            <person name="Marra M.A."/>
            <person name="Martienssen R."/>
            <person name="McCombie W.R."/>
        </authorList>
    </citation>
    <scope>NUCLEOTIDE SEQUENCE [LARGE SCALE GENOMIC DNA]</scope>
    <source>
        <strain>cv. Columbia</strain>
    </source>
</reference>
<reference key="2">
    <citation type="journal article" date="2017" name="Plant J.">
        <title>Araport11: a complete reannotation of the Arabidopsis thaliana reference genome.</title>
        <authorList>
            <person name="Cheng C.Y."/>
            <person name="Krishnakumar V."/>
            <person name="Chan A.P."/>
            <person name="Thibaud-Nissen F."/>
            <person name="Schobel S."/>
            <person name="Town C.D."/>
        </authorList>
    </citation>
    <scope>GENOME REANNOTATION</scope>
    <source>
        <strain>cv. Columbia</strain>
    </source>
</reference>
<reference key="3">
    <citation type="submission" date="2005-05" db="EMBL/GenBank/DDBJ databases">
        <authorList>
            <person name="Underwood B.A."/>
            <person name="Xiao Y.-L."/>
            <person name="Moskal W.A. Jr."/>
            <person name="Monaghan E.L."/>
            <person name="Wang W."/>
            <person name="Redman J.C."/>
            <person name="Wu H.C."/>
            <person name="Utterback T."/>
            <person name="Town C.D."/>
        </authorList>
    </citation>
    <scope>NUCLEOTIDE SEQUENCE [LARGE SCALE MRNA]</scope>
    <source>
        <strain>cv. Columbia</strain>
    </source>
</reference>
<reference key="4">
    <citation type="journal article" date="2008" name="J. Plant Physiol.">
        <title>Computational identification and analysis of immune-associated nucleotide gene family in Arabidopsis thaliana.</title>
        <authorList>
            <person name="Liu C."/>
            <person name="Wang T."/>
            <person name="Zhang W."/>
            <person name="Li X."/>
        </authorList>
    </citation>
    <scope>GENE FAMILY</scope>
    <scope>NOMENCLATURE</scope>
</reference>
<sequence>MFSESLPEDKPVLEVALTELPMVAESLPEDGSGLEVTCDLRLEHKPARTLLLVGRSGNGKSATGNSILGRKAFKSKGRASGVTTACELQSSTLPNGQIINVIDTPGLFSLSPSTEFTCREILRCFSLTKEGIDAVLLVFSLKNRLTEEEKSALFALKILFGSKIVDYMIVVFTNEDSLEDDGDTFEEYLEDSPDFKEILEPCNDRKVLFRNRSNAPVSQKAKQVQELLNYVEEIARLNGKSYMADLSHEIRENETAFQIKQQEILEMKGLYTRQEMLQMKKDMEKSFENQQLRQMMERVETELRETKERLEQQLKEEKSARLELEKRAKEVEKRSSDVVKELNDEQAKRLESESRAKEAVKQSNGVVENLNKELARIKQMATDLQKSKQWCIIM</sequence>
<gene>
    <name evidence="4" type="primary">IAN12</name>
    <name evidence="7" type="ordered locus">At4g09940</name>
    <name evidence="8" type="ORF">T5L19.70</name>
</gene>